<gene>
    <name type="primary">rpmB</name>
    <name type="synonym">rpl28</name>
    <name type="ordered locus">TP_0362</name>
</gene>
<name>RL28_TREPA</name>
<proteinExistence type="inferred from homology"/>
<organism>
    <name type="scientific">Treponema pallidum (strain Nichols)</name>
    <dbReference type="NCBI Taxonomy" id="243276"/>
    <lineage>
        <taxon>Bacteria</taxon>
        <taxon>Pseudomonadati</taxon>
        <taxon>Spirochaetota</taxon>
        <taxon>Spirochaetia</taxon>
        <taxon>Spirochaetales</taxon>
        <taxon>Treponemataceae</taxon>
        <taxon>Treponema</taxon>
    </lineage>
</organism>
<comment type="similarity">
    <text evidence="1">Belongs to the bacterial ribosomal protein bL28 family.</text>
</comment>
<sequence length="78" mass="8440">MARRCGLCGKGTISGCAVSKSMHHCKRVWKPNLLAVRVVVDGSALNMRICARCLRSNPLMKKAQPRANAPLRAAAPKL</sequence>
<dbReference type="EMBL" id="U70868">
    <property type="protein sequence ID" value="AAB39650.1"/>
    <property type="molecule type" value="Genomic_DNA"/>
</dbReference>
<dbReference type="EMBL" id="AE000520">
    <property type="protein sequence ID" value="AAC65347.1"/>
    <property type="molecule type" value="Genomic_DNA"/>
</dbReference>
<dbReference type="PIR" id="H71334">
    <property type="entry name" value="H71334"/>
</dbReference>
<dbReference type="RefSeq" id="WP_010881810.1">
    <property type="nucleotide sequence ID" value="NC_021490.2"/>
</dbReference>
<dbReference type="SMR" id="P96131"/>
<dbReference type="IntAct" id="P96131">
    <property type="interactions" value="4"/>
</dbReference>
<dbReference type="STRING" id="243276.TP_0362"/>
<dbReference type="EnsemblBacteria" id="AAC65347">
    <property type="protein sequence ID" value="AAC65347"/>
    <property type="gene ID" value="TP_0362"/>
</dbReference>
<dbReference type="GeneID" id="93876798"/>
<dbReference type="KEGG" id="tpa:TP_0362"/>
<dbReference type="KEGG" id="tpw:TPANIC_0362"/>
<dbReference type="eggNOG" id="COG0227">
    <property type="taxonomic scope" value="Bacteria"/>
</dbReference>
<dbReference type="HOGENOM" id="CLU_064548_7_0_12"/>
<dbReference type="OrthoDB" id="9805609at2"/>
<dbReference type="Proteomes" id="UP000000811">
    <property type="component" value="Chromosome"/>
</dbReference>
<dbReference type="GO" id="GO:1990904">
    <property type="term" value="C:ribonucleoprotein complex"/>
    <property type="evidence" value="ECO:0007669"/>
    <property type="project" value="UniProtKB-KW"/>
</dbReference>
<dbReference type="GO" id="GO:0005840">
    <property type="term" value="C:ribosome"/>
    <property type="evidence" value="ECO:0007669"/>
    <property type="project" value="UniProtKB-KW"/>
</dbReference>
<dbReference type="GO" id="GO:0003735">
    <property type="term" value="F:structural constituent of ribosome"/>
    <property type="evidence" value="ECO:0007669"/>
    <property type="project" value="InterPro"/>
</dbReference>
<dbReference type="GO" id="GO:0006412">
    <property type="term" value="P:translation"/>
    <property type="evidence" value="ECO:0007669"/>
    <property type="project" value="UniProtKB-UniRule"/>
</dbReference>
<dbReference type="Gene3D" id="2.30.170.40">
    <property type="entry name" value="Ribosomal protein L28/L24"/>
    <property type="match status" value="1"/>
</dbReference>
<dbReference type="HAMAP" id="MF_00373">
    <property type="entry name" value="Ribosomal_bL28"/>
    <property type="match status" value="1"/>
</dbReference>
<dbReference type="InterPro" id="IPR050096">
    <property type="entry name" value="Bacterial_rp_bL28"/>
</dbReference>
<dbReference type="InterPro" id="IPR026569">
    <property type="entry name" value="Ribosomal_bL28"/>
</dbReference>
<dbReference type="InterPro" id="IPR034704">
    <property type="entry name" value="Ribosomal_bL28/bL31-like_sf"/>
</dbReference>
<dbReference type="InterPro" id="IPR001383">
    <property type="entry name" value="Ribosomal_bL28_bact-type"/>
</dbReference>
<dbReference type="InterPro" id="IPR037147">
    <property type="entry name" value="Ribosomal_bL28_sf"/>
</dbReference>
<dbReference type="NCBIfam" id="TIGR00009">
    <property type="entry name" value="L28"/>
    <property type="match status" value="1"/>
</dbReference>
<dbReference type="PANTHER" id="PTHR39080">
    <property type="entry name" value="50S RIBOSOMAL PROTEIN L28"/>
    <property type="match status" value="1"/>
</dbReference>
<dbReference type="PANTHER" id="PTHR39080:SF1">
    <property type="entry name" value="LARGE RIBOSOMAL SUBUNIT PROTEIN BL28A"/>
    <property type="match status" value="1"/>
</dbReference>
<dbReference type="Pfam" id="PF00830">
    <property type="entry name" value="Ribosomal_L28"/>
    <property type="match status" value="1"/>
</dbReference>
<dbReference type="SUPFAM" id="SSF143800">
    <property type="entry name" value="L28p-like"/>
    <property type="match status" value="1"/>
</dbReference>
<reference key="1">
    <citation type="submission" date="1996-09" db="EMBL/GenBank/DDBJ databases">
        <authorList>
            <person name="Greene S.R."/>
            <person name="Stamm L.V."/>
            <person name="Hardham J.M."/>
            <person name="Barnes N.Y."/>
            <person name="Fyre J."/>
        </authorList>
    </citation>
    <scope>NUCLEOTIDE SEQUENCE [GENOMIC DNA]</scope>
    <source>
        <strain>Nichols</strain>
    </source>
</reference>
<reference key="2">
    <citation type="journal article" date="1998" name="Science">
        <title>Complete genome sequence of Treponema pallidum, the syphilis spirochete.</title>
        <authorList>
            <person name="Fraser C.M."/>
            <person name="Norris S.J."/>
            <person name="Weinstock G.M."/>
            <person name="White O."/>
            <person name="Sutton G.G."/>
            <person name="Dodson R.J."/>
            <person name="Gwinn M.L."/>
            <person name="Hickey E.K."/>
            <person name="Clayton R.A."/>
            <person name="Ketchum K.A."/>
            <person name="Sodergren E."/>
            <person name="Hardham J.M."/>
            <person name="McLeod M.P."/>
            <person name="Salzberg S.L."/>
            <person name="Peterson J.D."/>
            <person name="Khalak H.G."/>
            <person name="Richardson D.L."/>
            <person name="Howell J.K."/>
            <person name="Chidambaram M."/>
            <person name="Utterback T.R."/>
            <person name="McDonald L.A."/>
            <person name="Artiach P."/>
            <person name="Bowman C."/>
            <person name="Cotton M.D."/>
            <person name="Fujii C."/>
            <person name="Garland S.A."/>
            <person name="Hatch B."/>
            <person name="Horst K."/>
            <person name="Roberts K.M."/>
            <person name="Sandusky M."/>
            <person name="Weidman J.F."/>
            <person name="Smith H.O."/>
            <person name="Venter J.C."/>
        </authorList>
    </citation>
    <scope>NUCLEOTIDE SEQUENCE [LARGE SCALE GENOMIC DNA]</scope>
    <source>
        <strain>Nichols</strain>
    </source>
</reference>
<protein>
    <recommendedName>
        <fullName evidence="1">Large ribosomal subunit protein bL28</fullName>
    </recommendedName>
    <alternativeName>
        <fullName>50S ribosomal protein L28</fullName>
    </alternativeName>
</protein>
<feature type="chain" id="PRO_0000178580" description="Large ribosomal subunit protein bL28">
    <location>
        <begin position="1"/>
        <end position="78"/>
    </location>
</feature>
<keyword id="KW-1185">Reference proteome</keyword>
<keyword id="KW-0687">Ribonucleoprotein</keyword>
<keyword id="KW-0689">Ribosomal protein</keyword>
<evidence type="ECO:0000305" key="1"/>
<accession>P96131</accession>